<proteinExistence type="inferred from homology"/>
<protein>
    <recommendedName>
        <fullName evidence="3">Protein-lysine palmitoyltransferase CyaC</fullName>
        <ecNumber evidence="1">2.3.1.-</ecNumber>
    </recommendedName>
    <alternativeName>
        <fullName evidence="3">Cyclolysin-activating lysine-acyltransferase CyaC</fullName>
    </alternativeName>
</protein>
<name>CYAC_BORPA</name>
<sequence>MLPSAQAPSLLNPTDDFAALGNIAWLWMNSPMHRDWPVHLLARNTLAPIQLGQYILLRCNDVPVAYCSWALMDADTELSYVMAPSSLGGNAWNCGDRLWIIDWIAPFSRDDNRALRRALAERHPDSVGRSLRVRRGGDTARVKEYRGRALDAAAARAQLDRYHAELIAGLRASNGGYAPRGRGTA</sequence>
<keyword id="KW-0012">Acyltransferase</keyword>
<keyword id="KW-0204">Cytolysis</keyword>
<keyword id="KW-0963">Cytoplasm</keyword>
<keyword id="KW-0808">Transferase</keyword>
<keyword id="KW-0843">Virulence</keyword>
<organism>
    <name type="scientific">Bordetella parapertussis (strain 12822 / ATCC BAA-587 / NCTC 13253)</name>
    <dbReference type="NCBI Taxonomy" id="257311"/>
    <lineage>
        <taxon>Bacteria</taxon>
        <taxon>Pseudomonadati</taxon>
        <taxon>Pseudomonadota</taxon>
        <taxon>Betaproteobacteria</taxon>
        <taxon>Burkholderiales</taxon>
        <taxon>Alcaligenaceae</taxon>
        <taxon>Bordetella</taxon>
    </lineage>
</organism>
<comment type="function">
    <text evidence="1">Protein-lysine palmitoyltransferase that catalyzes palmitoylation of the protoxin (CyaA) at two internal lysine residues, thereby converting it to the active toxin.</text>
</comment>
<comment type="catalytic activity">
    <reaction evidence="1">
        <text>hexadecanoyl-[ACP] + L-lysyl-[protein] = N(6)-hexadecanoyl-L-lysyl-[protein] + holo-[ACP] + H(+)</text>
        <dbReference type="Rhea" id="RHEA:70615"/>
        <dbReference type="Rhea" id="RHEA-COMP:9652"/>
        <dbReference type="Rhea" id="RHEA-COMP:9685"/>
        <dbReference type="Rhea" id="RHEA-COMP:9752"/>
        <dbReference type="Rhea" id="RHEA-COMP:14175"/>
        <dbReference type="ChEBI" id="CHEBI:15378"/>
        <dbReference type="ChEBI" id="CHEBI:29969"/>
        <dbReference type="ChEBI" id="CHEBI:64479"/>
        <dbReference type="ChEBI" id="CHEBI:78483"/>
        <dbReference type="ChEBI" id="CHEBI:138936"/>
    </reaction>
    <physiologicalReaction direction="left-to-right" evidence="1">
        <dbReference type="Rhea" id="RHEA:70616"/>
    </physiologicalReaction>
</comment>
<comment type="catalytic activity">
    <reaction evidence="1">
        <text>(9Z)-hexadecenoyl-[ACP] + L-lysyl-[protein] = N(6)-[(9Z)-hexadecenoyl]-L-lysyl-[protein] + holo-[ACP] + H(+)</text>
        <dbReference type="Rhea" id="RHEA:70651"/>
        <dbReference type="Rhea" id="RHEA-COMP:9685"/>
        <dbReference type="Rhea" id="RHEA-COMP:9752"/>
        <dbReference type="Rhea" id="RHEA-COMP:10800"/>
        <dbReference type="Rhea" id="RHEA-COMP:17945"/>
        <dbReference type="ChEBI" id="CHEBI:15378"/>
        <dbReference type="ChEBI" id="CHEBI:29969"/>
        <dbReference type="ChEBI" id="CHEBI:64479"/>
        <dbReference type="ChEBI" id="CHEBI:83989"/>
        <dbReference type="ChEBI" id="CHEBI:189851"/>
    </reaction>
    <physiologicalReaction direction="left-to-right" evidence="1">
        <dbReference type="Rhea" id="RHEA:70652"/>
    </physiologicalReaction>
</comment>
<comment type="subunit">
    <text evidence="2">Homodimer.</text>
</comment>
<comment type="subcellular location">
    <subcellularLocation>
        <location evidence="1">Cytoplasm</location>
    </subcellularLocation>
</comment>
<comment type="similarity">
    <text evidence="3">Belongs to the RTX toxin acyltransferase family.</text>
</comment>
<comment type="sequence caution" evidence="3">
    <conflict type="erroneous initiation">
        <sequence resource="EMBL-CDS" id="CAE40061"/>
    </conflict>
</comment>
<evidence type="ECO:0000250" key="1">
    <source>
        <dbReference type="UniProtKB" id="P0A3I5"/>
    </source>
</evidence>
<evidence type="ECO:0000250" key="2">
    <source>
        <dbReference type="UniProtKB" id="P55132"/>
    </source>
</evidence>
<evidence type="ECO:0000305" key="3"/>
<accession>P0A3I7</accession>
<accession>Q45359</accession>
<reference key="1">
    <citation type="journal article" date="2003" name="Nat. Genet.">
        <title>Comparative analysis of the genome sequences of Bordetella pertussis, Bordetella parapertussis and Bordetella bronchiseptica.</title>
        <authorList>
            <person name="Parkhill J."/>
            <person name="Sebaihia M."/>
            <person name="Preston A."/>
            <person name="Murphy L.D."/>
            <person name="Thomson N.R."/>
            <person name="Harris D.E."/>
            <person name="Holden M.T.G."/>
            <person name="Churcher C.M."/>
            <person name="Bentley S.D."/>
            <person name="Mungall K.L."/>
            <person name="Cerdeno-Tarraga A.-M."/>
            <person name="Temple L."/>
            <person name="James K.D."/>
            <person name="Harris B."/>
            <person name="Quail M.A."/>
            <person name="Achtman M."/>
            <person name="Atkin R."/>
            <person name="Baker S."/>
            <person name="Basham D."/>
            <person name="Bason N."/>
            <person name="Cherevach I."/>
            <person name="Chillingworth T."/>
            <person name="Collins M."/>
            <person name="Cronin A."/>
            <person name="Davis P."/>
            <person name="Doggett J."/>
            <person name="Feltwell T."/>
            <person name="Goble A."/>
            <person name="Hamlin N."/>
            <person name="Hauser H."/>
            <person name="Holroyd S."/>
            <person name="Jagels K."/>
            <person name="Leather S."/>
            <person name="Moule S."/>
            <person name="Norberczak H."/>
            <person name="O'Neil S."/>
            <person name="Ormond D."/>
            <person name="Price C."/>
            <person name="Rabbinowitsch E."/>
            <person name="Rutter S."/>
            <person name="Sanders M."/>
            <person name="Saunders D."/>
            <person name="Seeger K."/>
            <person name="Sharp S."/>
            <person name="Simmonds M."/>
            <person name="Skelton J."/>
            <person name="Squares R."/>
            <person name="Squares S."/>
            <person name="Stevens K."/>
            <person name="Unwin L."/>
            <person name="Whitehead S."/>
            <person name="Barrell B.G."/>
            <person name="Maskell D.J."/>
        </authorList>
    </citation>
    <scope>NUCLEOTIDE SEQUENCE [LARGE SCALE GENOMIC DNA]</scope>
    <source>
        <strain>12822 / ATCC BAA-587 / NCTC 13253</strain>
    </source>
</reference>
<feature type="chain" id="PRO_0000217889" description="Protein-lysine palmitoyltransferase CyaC">
    <location>
        <begin position="1"/>
        <end position="185"/>
    </location>
</feature>
<feature type="active site" evidence="2">
    <location>
        <position position="33"/>
    </location>
</feature>
<feature type="active site" evidence="2">
    <location>
        <position position="102"/>
    </location>
</feature>
<dbReference type="EC" id="2.3.1.-" evidence="1"/>
<dbReference type="EMBL" id="BX640423">
    <property type="protein sequence ID" value="CAE40061.1"/>
    <property type="status" value="ALT_INIT"/>
    <property type="molecule type" value="Genomic_DNA"/>
</dbReference>
<dbReference type="RefSeq" id="WP_010929994.1">
    <property type="nucleotide sequence ID" value="NC_002928.3"/>
</dbReference>
<dbReference type="SMR" id="P0A3I7"/>
<dbReference type="GeneID" id="69600711"/>
<dbReference type="GeneID" id="93206552"/>
<dbReference type="KEGG" id="bpa:BPP0320"/>
<dbReference type="HOGENOM" id="CLU_116529_0_1_4"/>
<dbReference type="Proteomes" id="UP000001421">
    <property type="component" value="Chromosome"/>
</dbReference>
<dbReference type="GO" id="GO:0005737">
    <property type="term" value="C:cytoplasm"/>
    <property type="evidence" value="ECO:0007669"/>
    <property type="project" value="UniProtKB-SubCell"/>
</dbReference>
<dbReference type="GO" id="GO:0140771">
    <property type="term" value="F:ACP-dependent peptidyl-lysine N6-palmitoyltransferase activity"/>
    <property type="evidence" value="ECO:0007669"/>
    <property type="project" value="RHEA"/>
</dbReference>
<dbReference type="GO" id="GO:0031640">
    <property type="term" value="P:killing of cells of another organism"/>
    <property type="evidence" value="ECO:0007669"/>
    <property type="project" value="UniProtKB-KW"/>
</dbReference>
<dbReference type="GO" id="GO:0009404">
    <property type="term" value="P:toxin metabolic process"/>
    <property type="evidence" value="ECO:0007669"/>
    <property type="project" value="InterPro"/>
</dbReference>
<dbReference type="InterPro" id="IPR003996">
    <property type="entry name" value="RTX_toxin-activating_protC_bac"/>
</dbReference>
<dbReference type="Pfam" id="PF02794">
    <property type="entry name" value="HlyC"/>
    <property type="match status" value="1"/>
</dbReference>
<dbReference type="PRINTS" id="PR01489">
    <property type="entry name" value="RTXTOXINC"/>
</dbReference>
<gene>
    <name evidence="1" type="primary">cyaC</name>
    <name type="synonym">hlyC</name>
    <name type="ordered locus">BPP0320</name>
</gene>